<organism>
    <name type="scientific">Parabacteroides distasonis (strain ATCC 8503 / DSM 20701 / CIP 104284 / JCM 5825 / NCTC 11152)</name>
    <dbReference type="NCBI Taxonomy" id="435591"/>
    <lineage>
        <taxon>Bacteria</taxon>
        <taxon>Pseudomonadati</taxon>
        <taxon>Bacteroidota</taxon>
        <taxon>Bacteroidia</taxon>
        <taxon>Bacteroidales</taxon>
        <taxon>Tannerellaceae</taxon>
        <taxon>Parabacteroides</taxon>
    </lineage>
</organism>
<dbReference type="EC" id="5.3.1.24" evidence="1"/>
<dbReference type="EMBL" id="CP000140">
    <property type="protein sequence ID" value="ABR42363.1"/>
    <property type="molecule type" value="Genomic_DNA"/>
</dbReference>
<dbReference type="RefSeq" id="WP_011966082.1">
    <property type="nucleotide sequence ID" value="NC_009615.1"/>
</dbReference>
<dbReference type="SMR" id="A6L9J9"/>
<dbReference type="STRING" id="435591.BDI_0587"/>
<dbReference type="PaxDb" id="435591-BDI_0587"/>
<dbReference type="KEGG" id="pdi:BDI_0587"/>
<dbReference type="PATRIC" id="fig|435591.13.peg.572"/>
<dbReference type="eggNOG" id="COG0135">
    <property type="taxonomic scope" value="Bacteria"/>
</dbReference>
<dbReference type="HOGENOM" id="CLU_076364_1_2_10"/>
<dbReference type="BioCyc" id="PDIS435591:G1G5A-604-MONOMER"/>
<dbReference type="UniPathway" id="UPA00035">
    <property type="reaction ID" value="UER00042"/>
</dbReference>
<dbReference type="Proteomes" id="UP000000566">
    <property type="component" value="Chromosome"/>
</dbReference>
<dbReference type="GO" id="GO:0004640">
    <property type="term" value="F:phosphoribosylanthranilate isomerase activity"/>
    <property type="evidence" value="ECO:0007669"/>
    <property type="project" value="UniProtKB-UniRule"/>
</dbReference>
<dbReference type="GO" id="GO:0000162">
    <property type="term" value="P:L-tryptophan biosynthetic process"/>
    <property type="evidence" value="ECO:0007669"/>
    <property type="project" value="UniProtKB-UniRule"/>
</dbReference>
<dbReference type="CDD" id="cd00405">
    <property type="entry name" value="PRAI"/>
    <property type="match status" value="1"/>
</dbReference>
<dbReference type="Gene3D" id="3.20.20.70">
    <property type="entry name" value="Aldolase class I"/>
    <property type="match status" value="1"/>
</dbReference>
<dbReference type="HAMAP" id="MF_00135">
    <property type="entry name" value="PRAI"/>
    <property type="match status" value="1"/>
</dbReference>
<dbReference type="InterPro" id="IPR013785">
    <property type="entry name" value="Aldolase_TIM"/>
</dbReference>
<dbReference type="InterPro" id="IPR001240">
    <property type="entry name" value="PRAI_dom"/>
</dbReference>
<dbReference type="InterPro" id="IPR011060">
    <property type="entry name" value="RibuloseP-bd_barrel"/>
</dbReference>
<dbReference type="InterPro" id="IPR044643">
    <property type="entry name" value="TrpF_fam"/>
</dbReference>
<dbReference type="PANTHER" id="PTHR42894">
    <property type="entry name" value="N-(5'-PHOSPHORIBOSYL)ANTHRANILATE ISOMERASE"/>
    <property type="match status" value="1"/>
</dbReference>
<dbReference type="PANTHER" id="PTHR42894:SF1">
    <property type="entry name" value="N-(5'-PHOSPHORIBOSYL)ANTHRANILATE ISOMERASE"/>
    <property type="match status" value="1"/>
</dbReference>
<dbReference type="Pfam" id="PF00697">
    <property type="entry name" value="PRAI"/>
    <property type="match status" value="1"/>
</dbReference>
<dbReference type="SUPFAM" id="SSF51366">
    <property type="entry name" value="Ribulose-phoshate binding barrel"/>
    <property type="match status" value="1"/>
</dbReference>
<gene>
    <name evidence="1" type="primary">trpF</name>
    <name type="ordered locus">BDI_0587</name>
</gene>
<keyword id="KW-0028">Amino-acid biosynthesis</keyword>
<keyword id="KW-0057">Aromatic amino acid biosynthesis</keyword>
<keyword id="KW-0413">Isomerase</keyword>
<keyword id="KW-1185">Reference proteome</keyword>
<keyword id="KW-0822">Tryptophan biosynthesis</keyword>
<reference key="1">
    <citation type="journal article" date="2007" name="PLoS Biol.">
        <title>Evolution of symbiotic bacteria in the distal human intestine.</title>
        <authorList>
            <person name="Xu J."/>
            <person name="Mahowald M.A."/>
            <person name="Ley R.E."/>
            <person name="Lozupone C.A."/>
            <person name="Hamady M."/>
            <person name="Martens E.C."/>
            <person name="Henrissat B."/>
            <person name="Coutinho P.M."/>
            <person name="Minx P."/>
            <person name="Latreille P."/>
            <person name="Cordum H."/>
            <person name="Van Brunt A."/>
            <person name="Kim K."/>
            <person name="Fulton R.S."/>
            <person name="Fulton L.A."/>
            <person name="Clifton S.W."/>
            <person name="Wilson R.K."/>
            <person name="Knight R.D."/>
            <person name="Gordon J.I."/>
        </authorList>
    </citation>
    <scope>NUCLEOTIDE SEQUENCE [LARGE SCALE GENOMIC DNA]</scope>
    <source>
        <strain>ATCC 8503 / DSM 20701 / CIP 104284 / JCM 5825 / NCTC 11152</strain>
    </source>
</reference>
<sequence>MIIKVCGMREPQNIREVAALAINWIGFIFYERSKRFVERCPTEQQATDSEQLSPKKVGVFVNATIESMMEKASTYKLDYLQLHGNESPEDCHTLQKRGYSLIKAFPIATKEDFEKTREYEGRVDYFLFDTRCEGYGGSGKRFDWSILTGYKGETPFLLSGGIRPENAEAIRNFRHPRFAGIDLNSGFEIEPGLKDIDKLKNFIQQILHPAVETGRAPSPTV</sequence>
<comment type="catalytic activity">
    <reaction evidence="1">
        <text>N-(5-phospho-beta-D-ribosyl)anthranilate = 1-(2-carboxyphenylamino)-1-deoxy-D-ribulose 5-phosphate</text>
        <dbReference type="Rhea" id="RHEA:21540"/>
        <dbReference type="ChEBI" id="CHEBI:18277"/>
        <dbReference type="ChEBI" id="CHEBI:58613"/>
        <dbReference type="EC" id="5.3.1.24"/>
    </reaction>
</comment>
<comment type="pathway">
    <text evidence="1">Amino-acid biosynthesis; L-tryptophan biosynthesis; L-tryptophan from chorismate: step 3/5.</text>
</comment>
<comment type="similarity">
    <text evidence="1">Belongs to the TrpF family.</text>
</comment>
<accession>A6L9J9</accession>
<protein>
    <recommendedName>
        <fullName evidence="1">N-(5'-phosphoribosyl)anthranilate isomerase</fullName>
        <shortName evidence="1">PRAI</shortName>
        <ecNumber evidence="1">5.3.1.24</ecNumber>
    </recommendedName>
</protein>
<proteinExistence type="inferred from homology"/>
<name>TRPF_PARD8</name>
<evidence type="ECO:0000255" key="1">
    <source>
        <dbReference type="HAMAP-Rule" id="MF_00135"/>
    </source>
</evidence>
<feature type="chain" id="PRO_1000197114" description="N-(5'-phosphoribosyl)anthranilate isomerase">
    <location>
        <begin position="1"/>
        <end position="221"/>
    </location>
</feature>